<keyword id="KW-0963">Cytoplasm</keyword>
<keyword id="KW-0251">Elongation factor</keyword>
<keyword id="KW-0342">GTP-binding</keyword>
<keyword id="KW-0378">Hydrolase</keyword>
<keyword id="KW-0460">Magnesium</keyword>
<keyword id="KW-0479">Metal-binding</keyword>
<keyword id="KW-0547">Nucleotide-binding</keyword>
<keyword id="KW-0648">Protein biosynthesis</keyword>
<feature type="chain" id="PRO_1000201415" description="Elongation factor Tu">
    <location>
        <begin position="1"/>
        <end position="398"/>
    </location>
</feature>
<feature type="domain" description="tr-type G">
    <location>
        <begin position="10"/>
        <end position="207"/>
    </location>
</feature>
<feature type="region of interest" description="G1" evidence="1">
    <location>
        <begin position="19"/>
        <end position="26"/>
    </location>
</feature>
<feature type="region of interest" description="G2" evidence="1">
    <location>
        <begin position="63"/>
        <end position="67"/>
    </location>
</feature>
<feature type="region of interest" description="G3" evidence="1">
    <location>
        <begin position="84"/>
        <end position="87"/>
    </location>
</feature>
<feature type="region of interest" description="G4" evidence="1">
    <location>
        <begin position="139"/>
        <end position="142"/>
    </location>
</feature>
<feature type="region of interest" description="G5" evidence="1">
    <location>
        <begin position="177"/>
        <end position="179"/>
    </location>
</feature>
<feature type="binding site" evidence="2">
    <location>
        <begin position="19"/>
        <end position="26"/>
    </location>
    <ligand>
        <name>GTP</name>
        <dbReference type="ChEBI" id="CHEBI:37565"/>
    </ligand>
</feature>
<feature type="binding site" evidence="2">
    <location>
        <position position="26"/>
    </location>
    <ligand>
        <name>Mg(2+)</name>
        <dbReference type="ChEBI" id="CHEBI:18420"/>
    </ligand>
</feature>
<feature type="binding site" evidence="2">
    <location>
        <begin position="84"/>
        <end position="88"/>
    </location>
    <ligand>
        <name>GTP</name>
        <dbReference type="ChEBI" id="CHEBI:37565"/>
    </ligand>
</feature>
<feature type="binding site" evidence="2">
    <location>
        <begin position="139"/>
        <end position="142"/>
    </location>
    <ligand>
        <name>GTP</name>
        <dbReference type="ChEBI" id="CHEBI:37565"/>
    </ligand>
</feature>
<sequence length="398" mass="43971">MAKEKYDRSKPHVNIGTIGHVDHGKTTLTAAITTVLARRLPSSVNQPKDYASIDAAPEERERGITINTAHVEYETEKRHYAHIDAPGHADYVKNMITGAAQMDGAILVVASTDGPMPQTREHILLSRQVGVKHLIVFMNKVDLVDDEELLELVEMEIRDLLSEYDFPGDDLPVIQGSALKALEGDSKYEDIVMELMNTVDEYIPEPERDTDKPLLLPVEDVFSITGRGTVASGRIDRGIVKVNDEIEIVGIKEETQKAVVTGVEMFRKQLDEGLAGDNVGVLLRGVQRDEIERGQVIAKPGSINPHTKFKGEVYILTKEEGGRHTPFFNNYRPQFYFRTTDVTGSIELPAGTEMVMPGDNVTIDVELIHPIAVEQGTTFSIREGGRTVGSGMVTEIEA</sequence>
<name>EFTU_STRZJ</name>
<accession>C1CF71</accession>
<dbReference type="EC" id="3.6.5.3" evidence="2"/>
<dbReference type="EMBL" id="CP000919">
    <property type="protein sequence ID" value="ACO19888.1"/>
    <property type="molecule type" value="Genomic_DNA"/>
</dbReference>
<dbReference type="RefSeq" id="WP_001040724.1">
    <property type="nucleotide sequence ID" value="NC_012466.1"/>
</dbReference>
<dbReference type="SMR" id="C1CF71"/>
<dbReference type="GeneID" id="45653269"/>
<dbReference type="KEGG" id="sjj:SPJ_1388"/>
<dbReference type="HOGENOM" id="CLU_007265_0_1_9"/>
<dbReference type="Proteomes" id="UP000002206">
    <property type="component" value="Chromosome"/>
</dbReference>
<dbReference type="GO" id="GO:0005829">
    <property type="term" value="C:cytosol"/>
    <property type="evidence" value="ECO:0007669"/>
    <property type="project" value="TreeGrafter"/>
</dbReference>
<dbReference type="GO" id="GO:0005525">
    <property type="term" value="F:GTP binding"/>
    <property type="evidence" value="ECO:0007669"/>
    <property type="project" value="UniProtKB-UniRule"/>
</dbReference>
<dbReference type="GO" id="GO:0003924">
    <property type="term" value="F:GTPase activity"/>
    <property type="evidence" value="ECO:0007669"/>
    <property type="project" value="InterPro"/>
</dbReference>
<dbReference type="GO" id="GO:0003746">
    <property type="term" value="F:translation elongation factor activity"/>
    <property type="evidence" value="ECO:0007669"/>
    <property type="project" value="UniProtKB-UniRule"/>
</dbReference>
<dbReference type="CDD" id="cd01884">
    <property type="entry name" value="EF_Tu"/>
    <property type="match status" value="1"/>
</dbReference>
<dbReference type="CDD" id="cd03697">
    <property type="entry name" value="EFTU_II"/>
    <property type="match status" value="1"/>
</dbReference>
<dbReference type="CDD" id="cd03707">
    <property type="entry name" value="EFTU_III"/>
    <property type="match status" value="1"/>
</dbReference>
<dbReference type="FunFam" id="2.40.30.10:FF:000001">
    <property type="entry name" value="Elongation factor Tu"/>
    <property type="match status" value="1"/>
</dbReference>
<dbReference type="FunFam" id="3.40.50.300:FF:000003">
    <property type="entry name" value="Elongation factor Tu"/>
    <property type="match status" value="1"/>
</dbReference>
<dbReference type="Gene3D" id="3.40.50.300">
    <property type="entry name" value="P-loop containing nucleotide triphosphate hydrolases"/>
    <property type="match status" value="1"/>
</dbReference>
<dbReference type="Gene3D" id="2.40.30.10">
    <property type="entry name" value="Translation factors"/>
    <property type="match status" value="2"/>
</dbReference>
<dbReference type="HAMAP" id="MF_00118_B">
    <property type="entry name" value="EF_Tu_B"/>
    <property type="match status" value="1"/>
</dbReference>
<dbReference type="InterPro" id="IPR041709">
    <property type="entry name" value="EF-Tu_GTP-bd"/>
</dbReference>
<dbReference type="InterPro" id="IPR050055">
    <property type="entry name" value="EF-Tu_GTPase"/>
</dbReference>
<dbReference type="InterPro" id="IPR004161">
    <property type="entry name" value="EFTu-like_2"/>
</dbReference>
<dbReference type="InterPro" id="IPR033720">
    <property type="entry name" value="EFTU_2"/>
</dbReference>
<dbReference type="InterPro" id="IPR031157">
    <property type="entry name" value="G_TR_CS"/>
</dbReference>
<dbReference type="InterPro" id="IPR027417">
    <property type="entry name" value="P-loop_NTPase"/>
</dbReference>
<dbReference type="InterPro" id="IPR005225">
    <property type="entry name" value="Small_GTP-bd"/>
</dbReference>
<dbReference type="InterPro" id="IPR000795">
    <property type="entry name" value="T_Tr_GTP-bd_dom"/>
</dbReference>
<dbReference type="InterPro" id="IPR009000">
    <property type="entry name" value="Transl_B-barrel_sf"/>
</dbReference>
<dbReference type="InterPro" id="IPR009001">
    <property type="entry name" value="Transl_elong_EF1A/Init_IF2_C"/>
</dbReference>
<dbReference type="InterPro" id="IPR004541">
    <property type="entry name" value="Transl_elong_EFTu/EF1A_bac/org"/>
</dbReference>
<dbReference type="InterPro" id="IPR004160">
    <property type="entry name" value="Transl_elong_EFTu/EF1A_C"/>
</dbReference>
<dbReference type="NCBIfam" id="TIGR00485">
    <property type="entry name" value="EF-Tu"/>
    <property type="match status" value="1"/>
</dbReference>
<dbReference type="NCBIfam" id="NF000766">
    <property type="entry name" value="PRK00049.1"/>
    <property type="match status" value="1"/>
</dbReference>
<dbReference type="NCBIfam" id="NF009372">
    <property type="entry name" value="PRK12735.1"/>
    <property type="match status" value="1"/>
</dbReference>
<dbReference type="NCBIfam" id="NF009373">
    <property type="entry name" value="PRK12736.1"/>
    <property type="match status" value="1"/>
</dbReference>
<dbReference type="NCBIfam" id="TIGR00231">
    <property type="entry name" value="small_GTP"/>
    <property type="match status" value="1"/>
</dbReference>
<dbReference type="PANTHER" id="PTHR43721:SF22">
    <property type="entry name" value="ELONGATION FACTOR TU, MITOCHONDRIAL"/>
    <property type="match status" value="1"/>
</dbReference>
<dbReference type="PANTHER" id="PTHR43721">
    <property type="entry name" value="ELONGATION FACTOR TU-RELATED"/>
    <property type="match status" value="1"/>
</dbReference>
<dbReference type="Pfam" id="PF00009">
    <property type="entry name" value="GTP_EFTU"/>
    <property type="match status" value="1"/>
</dbReference>
<dbReference type="Pfam" id="PF03144">
    <property type="entry name" value="GTP_EFTU_D2"/>
    <property type="match status" value="1"/>
</dbReference>
<dbReference type="Pfam" id="PF03143">
    <property type="entry name" value="GTP_EFTU_D3"/>
    <property type="match status" value="1"/>
</dbReference>
<dbReference type="PRINTS" id="PR00315">
    <property type="entry name" value="ELONGATNFCT"/>
</dbReference>
<dbReference type="SUPFAM" id="SSF50465">
    <property type="entry name" value="EF-Tu/eEF-1alpha/eIF2-gamma C-terminal domain"/>
    <property type="match status" value="1"/>
</dbReference>
<dbReference type="SUPFAM" id="SSF52540">
    <property type="entry name" value="P-loop containing nucleoside triphosphate hydrolases"/>
    <property type="match status" value="1"/>
</dbReference>
<dbReference type="SUPFAM" id="SSF50447">
    <property type="entry name" value="Translation proteins"/>
    <property type="match status" value="1"/>
</dbReference>
<dbReference type="PROSITE" id="PS00301">
    <property type="entry name" value="G_TR_1"/>
    <property type="match status" value="1"/>
</dbReference>
<dbReference type="PROSITE" id="PS51722">
    <property type="entry name" value="G_TR_2"/>
    <property type="match status" value="1"/>
</dbReference>
<reference key="1">
    <citation type="journal article" date="2010" name="Genome Biol.">
        <title>Structure and dynamics of the pan-genome of Streptococcus pneumoniae and closely related species.</title>
        <authorList>
            <person name="Donati C."/>
            <person name="Hiller N.L."/>
            <person name="Tettelin H."/>
            <person name="Muzzi A."/>
            <person name="Croucher N.J."/>
            <person name="Angiuoli S.V."/>
            <person name="Oggioni M."/>
            <person name="Dunning Hotopp J.C."/>
            <person name="Hu F.Z."/>
            <person name="Riley D.R."/>
            <person name="Covacci A."/>
            <person name="Mitchell T.J."/>
            <person name="Bentley S.D."/>
            <person name="Kilian M."/>
            <person name="Ehrlich G.D."/>
            <person name="Rappuoli R."/>
            <person name="Moxon E.R."/>
            <person name="Masignani V."/>
        </authorList>
    </citation>
    <scope>NUCLEOTIDE SEQUENCE [LARGE SCALE GENOMIC DNA]</scope>
    <source>
        <strain>JJA</strain>
    </source>
</reference>
<comment type="function">
    <text evidence="2">GTP hydrolase that promotes the GTP-dependent binding of aminoacyl-tRNA to the A-site of ribosomes during protein biosynthesis.</text>
</comment>
<comment type="catalytic activity">
    <reaction evidence="2">
        <text>GTP + H2O = GDP + phosphate + H(+)</text>
        <dbReference type="Rhea" id="RHEA:19669"/>
        <dbReference type="ChEBI" id="CHEBI:15377"/>
        <dbReference type="ChEBI" id="CHEBI:15378"/>
        <dbReference type="ChEBI" id="CHEBI:37565"/>
        <dbReference type="ChEBI" id="CHEBI:43474"/>
        <dbReference type="ChEBI" id="CHEBI:58189"/>
        <dbReference type="EC" id="3.6.5.3"/>
    </reaction>
    <physiologicalReaction direction="left-to-right" evidence="2">
        <dbReference type="Rhea" id="RHEA:19670"/>
    </physiologicalReaction>
</comment>
<comment type="subunit">
    <text evidence="2">Monomer.</text>
</comment>
<comment type="subcellular location">
    <subcellularLocation>
        <location evidence="2">Cytoplasm</location>
    </subcellularLocation>
</comment>
<comment type="similarity">
    <text evidence="2">Belongs to the TRAFAC class translation factor GTPase superfamily. Classic translation factor GTPase family. EF-Tu/EF-1A subfamily.</text>
</comment>
<gene>
    <name evidence="2" type="primary">tuf</name>
    <name type="ordered locus">SPJ_1388</name>
</gene>
<protein>
    <recommendedName>
        <fullName evidence="2">Elongation factor Tu</fullName>
        <shortName evidence="2">EF-Tu</shortName>
        <ecNumber evidence="2">3.6.5.3</ecNumber>
    </recommendedName>
</protein>
<organism>
    <name type="scientific">Streptococcus pneumoniae (strain JJA)</name>
    <dbReference type="NCBI Taxonomy" id="488222"/>
    <lineage>
        <taxon>Bacteria</taxon>
        <taxon>Bacillati</taxon>
        <taxon>Bacillota</taxon>
        <taxon>Bacilli</taxon>
        <taxon>Lactobacillales</taxon>
        <taxon>Streptococcaceae</taxon>
        <taxon>Streptococcus</taxon>
    </lineage>
</organism>
<evidence type="ECO:0000250" key="1"/>
<evidence type="ECO:0000255" key="2">
    <source>
        <dbReference type="HAMAP-Rule" id="MF_00118"/>
    </source>
</evidence>
<proteinExistence type="inferred from homology"/>